<reference key="1">
    <citation type="journal article" date="2007" name="J. Bacteriol.">
        <title>The complete genome sequence of Bacillus thuringiensis Al Hakam.</title>
        <authorList>
            <person name="Challacombe J.F."/>
            <person name="Altherr M.R."/>
            <person name="Xie G."/>
            <person name="Bhotika S.S."/>
            <person name="Brown N."/>
            <person name="Bruce D."/>
            <person name="Campbell C.S."/>
            <person name="Campbell M.L."/>
            <person name="Chen J."/>
            <person name="Chertkov O."/>
            <person name="Cleland C."/>
            <person name="Dimitrijevic M."/>
            <person name="Doggett N.A."/>
            <person name="Fawcett J.J."/>
            <person name="Glavina T."/>
            <person name="Goodwin L.A."/>
            <person name="Green L.D."/>
            <person name="Han C.S."/>
            <person name="Hill K.K."/>
            <person name="Hitchcock P."/>
            <person name="Jackson P.J."/>
            <person name="Keim P."/>
            <person name="Kewalramani A.R."/>
            <person name="Longmire J."/>
            <person name="Lucas S."/>
            <person name="Malfatti S."/>
            <person name="Martinez D."/>
            <person name="McMurry K."/>
            <person name="Meincke L.J."/>
            <person name="Misra M."/>
            <person name="Moseman B.L."/>
            <person name="Mundt M."/>
            <person name="Munk A.C."/>
            <person name="Okinaka R.T."/>
            <person name="Parson-Quintana B."/>
            <person name="Reilly L.P."/>
            <person name="Richardson P."/>
            <person name="Robinson D.L."/>
            <person name="Saunders E."/>
            <person name="Tapia R."/>
            <person name="Tesmer J.G."/>
            <person name="Thayer N."/>
            <person name="Thompson L.S."/>
            <person name="Tice H."/>
            <person name="Ticknor L.O."/>
            <person name="Wills P.L."/>
            <person name="Gilna P."/>
            <person name="Brettin T.S."/>
        </authorList>
    </citation>
    <scope>NUCLEOTIDE SEQUENCE [LARGE SCALE GENOMIC DNA]</scope>
    <source>
        <strain>Al Hakam</strain>
    </source>
</reference>
<name>CH60_BACAH</name>
<protein>
    <recommendedName>
        <fullName evidence="1">Chaperonin GroEL</fullName>
        <ecNumber evidence="1">5.6.1.7</ecNumber>
    </recommendedName>
    <alternativeName>
        <fullName evidence="1">60 kDa chaperonin</fullName>
    </alternativeName>
    <alternativeName>
        <fullName evidence="1">Chaperonin-60</fullName>
        <shortName evidence="1">Cpn60</shortName>
    </alternativeName>
</protein>
<sequence>MAKDIKFSEEARRSMLRGVDTLANAVKVTLGPKGRNVVLEKKFGSPLITNDGVTIAKEIELEDAFENMGAKLVAEVASKTNDVAGDGTTTATVLAQAMIREGLKNVTAGANPMGLRKGIEKAVVAAVEELKTISKPIEGKSSIAQVAAISAADEEVGQLIAEAMERVGNDGVITLEESKGFTTELDVVEGMQFDRGYASPYMITDSDKMEAVLDNPYILITDKKISNIQEILPVLEQVVQQGKPLLIIAEDVEGEALATLVVNKLRGTFNVVAVKAPGFGDRRKAMLEDIAILTGGEVITEELGRDLKSATVESLGRAGKVVVTKENTTVVEGVGSTEQIEARIGQIRAQLEETTSEFDREKLQERLAKLAGGVAVIKVGAATETELKERKLRIEDALNSTRAAVEEGIVAGGGTSLMNVYTKVASIVAEGDEATGINIVLRALEEPVRQIAINAGLEGSVVVERLKGEKVGVGFNAATGEWVNMLETGIVDPAKVTRSALQNAASVAAMFLTTEAVVADKPEPNAPAMPDMGGMGMGGMGGMM</sequence>
<evidence type="ECO:0000255" key="1">
    <source>
        <dbReference type="HAMAP-Rule" id="MF_00600"/>
    </source>
</evidence>
<comment type="function">
    <text evidence="1">Together with its co-chaperonin GroES, plays an essential role in assisting protein folding. The GroEL-GroES system forms a nano-cage that allows encapsulation of the non-native substrate proteins and provides a physical environment optimized to promote and accelerate protein folding.</text>
</comment>
<comment type="catalytic activity">
    <reaction evidence="1">
        <text>ATP + H2O + a folded polypeptide = ADP + phosphate + an unfolded polypeptide.</text>
        <dbReference type="EC" id="5.6.1.7"/>
    </reaction>
</comment>
<comment type="subunit">
    <text evidence="1">Forms a cylinder of 14 subunits composed of two heptameric rings stacked back-to-back. Interacts with the co-chaperonin GroES.</text>
</comment>
<comment type="subcellular location">
    <subcellularLocation>
        <location evidence="1">Cytoplasm</location>
    </subcellularLocation>
</comment>
<comment type="similarity">
    <text evidence="1">Belongs to the chaperonin (HSP60) family.</text>
</comment>
<organism>
    <name type="scientific">Bacillus thuringiensis (strain Al Hakam)</name>
    <dbReference type="NCBI Taxonomy" id="412694"/>
    <lineage>
        <taxon>Bacteria</taxon>
        <taxon>Bacillati</taxon>
        <taxon>Bacillota</taxon>
        <taxon>Bacilli</taxon>
        <taxon>Bacillales</taxon>
        <taxon>Bacillaceae</taxon>
        <taxon>Bacillus</taxon>
        <taxon>Bacillus cereus group</taxon>
    </lineage>
</organism>
<dbReference type="EC" id="5.6.1.7" evidence="1"/>
<dbReference type="EMBL" id="CP000485">
    <property type="protein sequence ID" value="ABK83657.1"/>
    <property type="molecule type" value="Genomic_DNA"/>
</dbReference>
<dbReference type="RefSeq" id="WP_001029999.1">
    <property type="nucleotide sequence ID" value="NC_008600.1"/>
</dbReference>
<dbReference type="SMR" id="A0R8W4"/>
<dbReference type="GeneID" id="69534143"/>
<dbReference type="KEGG" id="btl:BALH_0251"/>
<dbReference type="HOGENOM" id="CLU_016503_3_0_9"/>
<dbReference type="GO" id="GO:0005737">
    <property type="term" value="C:cytoplasm"/>
    <property type="evidence" value="ECO:0007669"/>
    <property type="project" value="UniProtKB-SubCell"/>
</dbReference>
<dbReference type="GO" id="GO:0005524">
    <property type="term" value="F:ATP binding"/>
    <property type="evidence" value="ECO:0007669"/>
    <property type="project" value="UniProtKB-UniRule"/>
</dbReference>
<dbReference type="GO" id="GO:0140662">
    <property type="term" value="F:ATP-dependent protein folding chaperone"/>
    <property type="evidence" value="ECO:0007669"/>
    <property type="project" value="InterPro"/>
</dbReference>
<dbReference type="GO" id="GO:0016853">
    <property type="term" value="F:isomerase activity"/>
    <property type="evidence" value="ECO:0007669"/>
    <property type="project" value="UniProtKB-KW"/>
</dbReference>
<dbReference type="GO" id="GO:0051082">
    <property type="term" value="F:unfolded protein binding"/>
    <property type="evidence" value="ECO:0007669"/>
    <property type="project" value="UniProtKB-UniRule"/>
</dbReference>
<dbReference type="GO" id="GO:0042026">
    <property type="term" value="P:protein refolding"/>
    <property type="evidence" value="ECO:0007669"/>
    <property type="project" value="UniProtKB-UniRule"/>
</dbReference>
<dbReference type="CDD" id="cd03344">
    <property type="entry name" value="GroEL"/>
    <property type="match status" value="1"/>
</dbReference>
<dbReference type="FunFam" id="1.10.560.10:FF:000001">
    <property type="entry name" value="60 kDa chaperonin"/>
    <property type="match status" value="1"/>
</dbReference>
<dbReference type="FunFam" id="3.50.7.10:FF:000001">
    <property type="entry name" value="60 kDa chaperonin"/>
    <property type="match status" value="1"/>
</dbReference>
<dbReference type="Gene3D" id="3.50.7.10">
    <property type="entry name" value="GroEL"/>
    <property type="match status" value="1"/>
</dbReference>
<dbReference type="Gene3D" id="1.10.560.10">
    <property type="entry name" value="GroEL-like equatorial domain"/>
    <property type="match status" value="1"/>
</dbReference>
<dbReference type="Gene3D" id="3.30.260.10">
    <property type="entry name" value="TCP-1-like chaperonin intermediate domain"/>
    <property type="match status" value="1"/>
</dbReference>
<dbReference type="HAMAP" id="MF_00600">
    <property type="entry name" value="CH60"/>
    <property type="match status" value="1"/>
</dbReference>
<dbReference type="InterPro" id="IPR018370">
    <property type="entry name" value="Chaperonin_Cpn60_CS"/>
</dbReference>
<dbReference type="InterPro" id="IPR001844">
    <property type="entry name" value="Cpn60/GroEL"/>
</dbReference>
<dbReference type="InterPro" id="IPR002423">
    <property type="entry name" value="Cpn60/GroEL/TCP-1"/>
</dbReference>
<dbReference type="InterPro" id="IPR027409">
    <property type="entry name" value="GroEL-like_apical_dom_sf"/>
</dbReference>
<dbReference type="InterPro" id="IPR027413">
    <property type="entry name" value="GROEL-like_equatorial_sf"/>
</dbReference>
<dbReference type="InterPro" id="IPR027410">
    <property type="entry name" value="TCP-1-like_intermed_sf"/>
</dbReference>
<dbReference type="NCBIfam" id="TIGR02348">
    <property type="entry name" value="GroEL"/>
    <property type="match status" value="1"/>
</dbReference>
<dbReference type="NCBIfam" id="NF000592">
    <property type="entry name" value="PRK00013.1"/>
    <property type="match status" value="1"/>
</dbReference>
<dbReference type="NCBIfam" id="NF009487">
    <property type="entry name" value="PRK12849.1"/>
    <property type="match status" value="1"/>
</dbReference>
<dbReference type="NCBIfam" id="NF009488">
    <property type="entry name" value="PRK12850.1"/>
    <property type="match status" value="1"/>
</dbReference>
<dbReference type="NCBIfam" id="NF009489">
    <property type="entry name" value="PRK12851.1"/>
    <property type="match status" value="1"/>
</dbReference>
<dbReference type="PANTHER" id="PTHR45633">
    <property type="entry name" value="60 KDA HEAT SHOCK PROTEIN, MITOCHONDRIAL"/>
    <property type="match status" value="1"/>
</dbReference>
<dbReference type="Pfam" id="PF00118">
    <property type="entry name" value="Cpn60_TCP1"/>
    <property type="match status" value="1"/>
</dbReference>
<dbReference type="PRINTS" id="PR00298">
    <property type="entry name" value="CHAPERONIN60"/>
</dbReference>
<dbReference type="SUPFAM" id="SSF52029">
    <property type="entry name" value="GroEL apical domain-like"/>
    <property type="match status" value="1"/>
</dbReference>
<dbReference type="SUPFAM" id="SSF48592">
    <property type="entry name" value="GroEL equatorial domain-like"/>
    <property type="match status" value="1"/>
</dbReference>
<dbReference type="SUPFAM" id="SSF54849">
    <property type="entry name" value="GroEL-intermediate domain like"/>
    <property type="match status" value="1"/>
</dbReference>
<dbReference type="PROSITE" id="PS00296">
    <property type="entry name" value="CHAPERONINS_CPN60"/>
    <property type="match status" value="1"/>
</dbReference>
<feature type="chain" id="PRO_1000025752" description="Chaperonin GroEL">
    <location>
        <begin position="1"/>
        <end position="544"/>
    </location>
</feature>
<feature type="binding site" evidence="1">
    <location>
        <begin position="29"/>
        <end position="32"/>
    </location>
    <ligand>
        <name>ATP</name>
        <dbReference type="ChEBI" id="CHEBI:30616"/>
    </ligand>
</feature>
<feature type="binding site" evidence="1">
    <location>
        <begin position="86"/>
        <end position="90"/>
    </location>
    <ligand>
        <name>ATP</name>
        <dbReference type="ChEBI" id="CHEBI:30616"/>
    </ligand>
</feature>
<feature type="binding site" evidence="1">
    <location>
        <position position="413"/>
    </location>
    <ligand>
        <name>ATP</name>
        <dbReference type="ChEBI" id="CHEBI:30616"/>
    </ligand>
</feature>
<feature type="binding site" evidence="1">
    <location>
        <begin position="476"/>
        <end position="478"/>
    </location>
    <ligand>
        <name>ATP</name>
        <dbReference type="ChEBI" id="CHEBI:30616"/>
    </ligand>
</feature>
<feature type="binding site" evidence="1">
    <location>
        <position position="492"/>
    </location>
    <ligand>
        <name>ATP</name>
        <dbReference type="ChEBI" id="CHEBI:30616"/>
    </ligand>
</feature>
<gene>
    <name evidence="1" type="primary">groEL</name>
    <name evidence="1" type="synonym">groL</name>
    <name type="ordered locus">BALH_0251</name>
</gene>
<proteinExistence type="inferred from homology"/>
<keyword id="KW-0067">ATP-binding</keyword>
<keyword id="KW-0143">Chaperone</keyword>
<keyword id="KW-0963">Cytoplasm</keyword>
<keyword id="KW-0413">Isomerase</keyword>
<keyword id="KW-0547">Nucleotide-binding</keyword>
<accession>A0R8W4</accession>